<accession>Q8R0F3</accession>
<accession>Q3TTT6</accession>
<accession>Q3TXM8</accession>
<accession>Q3U9A5</accession>
<name>SUMF1_MOUSE</name>
<reference key="1">
    <citation type="journal article" date="2005" name="Science">
        <title>The transcriptional landscape of the mammalian genome.</title>
        <authorList>
            <person name="Carninci P."/>
            <person name="Kasukawa T."/>
            <person name="Katayama S."/>
            <person name="Gough J."/>
            <person name="Frith M.C."/>
            <person name="Maeda N."/>
            <person name="Oyama R."/>
            <person name="Ravasi T."/>
            <person name="Lenhard B."/>
            <person name="Wells C."/>
            <person name="Kodzius R."/>
            <person name="Shimokawa K."/>
            <person name="Bajic V.B."/>
            <person name="Brenner S.E."/>
            <person name="Batalov S."/>
            <person name="Forrest A.R."/>
            <person name="Zavolan M."/>
            <person name="Davis M.J."/>
            <person name="Wilming L.G."/>
            <person name="Aidinis V."/>
            <person name="Allen J.E."/>
            <person name="Ambesi-Impiombato A."/>
            <person name="Apweiler R."/>
            <person name="Aturaliya R.N."/>
            <person name="Bailey T.L."/>
            <person name="Bansal M."/>
            <person name="Baxter L."/>
            <person name="Beisel K.W."/>
            <person name="Bersano T."/>
            <person name="Bono H."/>
            <person name="Chalk A.M."/>
            <person name="Chiu K.P."/>
            <person name="Choudhary V."/>
            <person name="Christoffels A."/>
            <person name="Clutterbuck D.R."/>
            <person name="Crowe M.L."/>
            <person name="Dalla E."/>
            <person name="Dalrymple B.P."/>
            <person name="de Bono B."/>
            <person name="Della Gatta G."/>
            <person name="di Bernardo D."/>
            <person name="Down T."/>
            <person name="Engstrom P."/>
            <person name="Fagiolini M."/>
            <person name="Faulkner G."/>
            <person name="Fletcher C.F."/>
            <person name="Fukushima T."/>
            <person name="Furuno M."/>
            <person name="Futaki S."/>
            <person name="Gariboldi M."/>
            <person name="Georgii-Hemming P."/>
            <person name="Gingeras T.R."/>
            <person name="Gojobori T."/>
            <person name="Green R.E."/>
            <person name="Gustincich S."/>
            <person name="Harbers M."/>
            <person name="Hayashi Y."/>
            <person name="Hensch T.K."/>
            <person name="Hirokawa N."/>
            <person name="Hill D."/>
            <person name="Huminiecki L."/>
            <person name="Iacono M."/>
            <person name="Ikeo K."/>
            <person name="Iwama A."/>
            <person name="Ishikawa T."/>
            <person name="Jakt M."/>
            <person name="Kanapin A."/>
            <person name="Katoh M."/>
            <person name="Kawasawa Y."/>
            <person name="Kelso J."/>
            <person name="Kitamura H."/>
            <person name="Kitano H."/>
            <person name="Kollias G."/>
            <person name="Krishnan S.P."/>
            <person name="Kruger A."/>
            <person name="Kummerfeld S.K."/>
            <person name="Kurochkin I.V."/>
            <person name="Lareau L.F."/>
            <person name="Lazarevic D."/>
            <person name="Lipovich L."/>
            <person name="Liu J."/>
            <person name="Liuni S."/>
            <person name="McWilliam S."/>
            <person name="Madan Babu M."/>
            <person name="Madera M."/>
            <person name="Marchionni L."/>
            <person name="Matsuda H."/>
            <person name="Matsuzawa S."/>
            <person name="Miki H."/>
            <person name="Mignone F."/>
            <person name="Miyake S."/>
            <person name="Morris K."/>
            <person name="Mottagui-Tabar S."/>
            <person name="Mulder N."/>
            <person name="Nakano N."/>
            <person name="Nakauchi H."/>
            <person name="Ng P."/>
            <person name="Nilsson R."/>
            <person name="Nishiguchi S."/>
            <person name="Nishikawa S."/>
            <person name="Nori F."/>
            <person name="Ohara O."/>
            <person name="Okazaki Y."/>
            <person name="Orlando V."/>
            <person name="Pang K.C."/>
            <person name="Pavan W.J."/>
            <person name="Pavesi G."/>
            <person name="Pesole G."/>
            <person name="Petrovsky N."/>
            <person name="Piazza S."/>
            <person name="Reed J."/>
            <person name="Reid J.F."/>
            <person name="Ring B.Z."/>
            <person name="Ringwald M."/>
            <person name="Rost B."/>
            <person name="Ruan Y."/>
            <person name="Salzberg S.L."/>
            <person name="Sandelin A."/>
            <person name="Schneider C."/>
            <person name="Schoenbach C."/>
            <person name="Sekiguchi K."/>
            <person name="Semple C.A."/>
            <person name="Seno S."/>
            <person name="Sessa L."/>
            <person name="Sheng Y."/>
            <person name="Shibata Y."/>
            <person name="Shimada H."/>
            <person name="Shimada K."/>
            <person name="Silva D."/>
            <person name="Sinclair B."/>
            <person name="Sperling S."/>
            <person name="Stupka E."/>
            <person name="Sugiura K."/>
            <person name="Sultana R."/>
            <person name="Takenaka Y."/>
            <person name="Taki K."/>
            <person name="Tammoja K."/>
            <person name="Tan S.L."/>
            <person name="Tang S."/>
            <person name="Taylor M.S."/>
            <person name="Tegner J."/>
            <person name="Teichmann S.A."/>
            <person name="Ueda H.R."/>
            <person name="van Nimwegen E."/>
            <person name="Verardo R."/>
            <person name="Wei C.L."/>
            <person name="Yagi K."/>
            <person name="Yamanishi H."/>
            <person name="Zabarovsky E."/>
            <person name="Zhu S."/>
            <person name="Zimmer A."/>
            <person name="Hide W."/>
            <person name="Bult C."/>
            <person name="Grimmond S.M."/>
            <person name="Teasdale R.D."/>
            <person name="Liu E.T."/>
            <person name="Brusic V."/>
            <person name="Quackenbush J."/>
            <person name="Wahlestedt C."/>
            <person name="Mattick J.S."/>
            <person name="Hume D.A."/>
            <person name="Kai C."/>
            <person name="Sasaki D."/>
            <person name="Tomaru Y."/>
            <person name="Fukuda S."/>
            <person name="Kanamori-Katayama M."/>
            <person name="Suzuki M."/>
            <person name="Aoki J."/>
            <person name="Arakawa T."/>
            <person name="Iida J."/>
            <person name="Imamura K."/>
            <person name="Itoh M."/>
            <person name="Kato T."/>
            <person name="Kawaji H."/>
            <person name="Kawagashira N."/>
            <person name="Kawashima T."/>
            <person name="Kojima M."/>
            <person name="Kondo S."/>
            <person name="Konno H."/>
            <person name="Nakano K."/>
            <person name="Ninomiya N."/>
            <person name="Nishio T."/>
            <person name="Okada M."/>
            <person name="Plessy C."/>
            <person name="Shibata K."/>
            <person name="Shiraki T."/>
            <person name="Suzuki S."/>
            <person name="Tagami M."/>
            <person name="Waki K."/>
            <person name="Watahiki A."/>
            <person name="Okamura-Oho Y."/>
            <person name="Suzuki H."/>
            <person name="Kawai J."/>
            <person name="Hayashizaki Y."/>
        </authorList>
    </citation>
    <scope>NUCLEOTIDE SEQUENCE [LARGE SCALE MRNA]</scope>
    <source>
        <strain>C57BL/6J</strain>
        <tissue>Bone marrow macrophage</tissue>
        <tissue>Head</tissue>
    </source>
</reference>
<reference key="2">
    <citation type="journal article" date="2004" name="Genome Res.">
        <title>The status, quality, and expansion of the NIH full-length cDNA project: the Mammalian Gene Collection (MGC).</title>
        <authorList>
            <consortium name="The MGC Project Team"/>
        </authorList>
    </citation>
    <scope>NUCLEOTIDE SEQUENCE [LARGE SCALE MRNA]</scope>
    <source>
        <strain>C57BL/6J</strain>
        <tissue>Retina</tissue>
    </source>
</reference>
<reference key="3">
    <citation type="journal article" date="2010" name="Cell">
        <title>A tissue-specific atlas of mouse protein phosphorylation and expression.</title>
        <authorList>
            <person name="Huttlin E.L."/>
            <person name="Jedrychowski M.P."/>
            <person name="Elias J.E."/>
            <person name="Goswami T."/>
            <person name="Rad R."/>
            <person name="Beausoleil S.A."/>
            <person name="Villen J."/>
            <person name="Haas W."/>
            <person name="Sowa M.E."/>
            <person name="Gygi S.P."/>
        </authorList>
    </citation>
    <scope>IDENTIFICATION BY MASS SPECTROMETRY [LARGE SCALE ANALYSIS]</scope>
    <source>
        <tissue>Kidney</tissue>
        <tissue>Testis</tissue>
    </source>
</reference>
<reference key="4">
    <citation type="journal article" date="2007" name="Proc. Natl. Acad. Sci. U.S.A.">
        <title>Systemic inflammation and neurodegeneration in a mouse model of multiple sulfatase deficiency.</title>
        <authorList>
            <person name="Settembre C."/>
            <person name="Annunziata I."/>
            <person name="Spampanato C."/>
            <person name="Zarcone D."/>
            <person name="Cobellis G."/>
            <person name="Nusco E."/>
            <person name="Zito E."/>
            <person name="Tacchetti C."/>
            <person name="Cosma M.P."/>
            <person name="Ballabio A."/>
        </authorList>
    </citation>
    <scope>DISRUPTION PHENOTYPE</scope>
</reference>
<comment type="function">
    <text evidence="1">Oxidase that catalyzes the conversion of cysteine to 3-oxoalanine on target proteins, using molecular oxygen and an unidentified reducing agent. 3-oxoalanine modification, which is also named formylglycine (fGly), occurs in the maturation of arylsulfatases and some alkaline phosphatases that use the hydrated form of 3-oxoalanine as a catalytic nucleophile. Known substrates include GALNS, ARSA, STS and ARSE.</text>
</comment>
<comment type="catalytic activity">
    <reaction evidence="1">
        <text>L-cysteinyl-[sulfatase] + 2 a thiol + O2 = an organic disulfide + 3-oxo-L-alanyl-[sulfatase] + hydrogen sulfide + H2O + H(+)</text>
        <dbReference type="Rhea" id="RHEA:51152"/>
        <dbReference type="Rhea" id="RHEA-COMP:12900"/>
        <dbReference type="Rhea" id="RHEA-COMP:12901"/>
        <dbReference type="ChEBI" id="CHEBI:15377"/>
        <dbReference type="ChEBI" id="CHEBI:15378"/>
        <dbReference type="ChEBI" id="CHEBI:15379"/>
        <dbReference type="ChEBI" id="CHEBI:29256"/>
        <dbReference type="ChEBI" id="CHEBI:29919"/>
        <dbReference type="ChEBI" id="CHEBI:29950"/>
        <dbReference type="ChEBI" id="CHEBI:35489"/>
        <dbReference type="ChEBI" id="CHEBI:85621"/>
        <dbReference type="EC" id="1.8.3.7"/>
    </reaction>
</comment>
<comment type="cofactor">
    <cofactor evidence="1">
        <name>Cu(2+)</name>
        <dbReference type="ChEBI" id="CHEBI:29036"/>
    </cofactor>
    <text evidence="1">The catalytic copper is required to activate oxygen and catalyze oxidative C-H activation.</text>
</comment>
<comment type="pathway">
    <text evidence="1">Protein modification; sulfatase oxidation.</text>
</comment>
<comment type="subunit">
    <text evidence="1">Monomer, homodimer and heterodimer with SUMF2.</text>
</comment>
<comment type="subcellular location">
    <subcellularLocation>
        <location evidence="1">Endoplasmic reticulum lumen</location>
    </subcellularLocation>
</comment>
<comment type="PTM">
    <text evidence="1">N-glycosylated. Contains high-mannose-type oligosaccharides.</text>
</comment>
<comment type="disruption phenotype">
    <text evidence="4">Mice display frequent early mortality, congenital growth retardation, skeletal abnormalities and neurological defects. Defects are caused by absence of all sulfatases activities. Massive glycosaminoglycans accumulation and cell vacuolization are observed in all tissues and are associated with systemic inflammation, apoptosis and neurodegeneration.</text>
</comment>
<comment type="similarity">
    <text evidence="5">Belongs to the sulfatase-modifying factor family.</text>
</comment>
<comment type="caution">
    <text evidence="1">The enzyme reaction was initially thought to act via a redox-active disulfide bond mechanism; however the disulfide bond only takes place with inactive enzyme that lacks the copper cofactor. The catalytic copper is required to activate oxygen and catalyze oxidative C-H activation.</text>
</comment>
<comment type="sequence caution" evidence="5">
    <conflict type="erroneous initiation">
        <sequence resource="EMBL-CDS" id="AAH26981"/>
    </conflict>
</comment>
<comment type="sequence caution" evidence="5">
    <conflict type="erroneous initiation">
        <sequence resource="EMBL-CDS" id="BAE30762"/>
    </conflict>
</comment>
<dbReference type="EC" id="1.8.3.7" evidence="1"/>
<dbReference type="EMBL" id="AK151874">
    <property type="protein sequence ID" value="BAE30762.1"/>
    <property type="status" value="ALT_INIT"/>
    <property type="molecule type" value="mRNA"/>
</dbReference>
<dbReference type="EMBL" id="AK159192">
    <property type="protein sequence ID" value="BAE34887.1"/>
    <property type="molecule type" value="mRNA"/>
</dbReference>
<dbReference type="EMBL" id="AK160917">
    <property type="protein sequence ID" value="BAE36091.1"/>
    <property type="molecule type" value="mRNA"/>
</dbReference>
<dbReference type="EMBL" id="AK161203">
    <property type="protein sequence ID" value="BAE36238.1"/>
    <property type="molecule type" value="mRNA"/>
</dbReference>
<dbReference type="EMBL" id="BC026981">
    <property type="protein sequence ID" value="AAH26981.1"/>
    <property type="status" value="ALT_INIT"/>
    <property type="molecule type" value="mRNA"/>
</dbReference>
<dbReference type="CCDS" id="CCDS51868.1"/>
<dbReference type="RefSeq" id="NP_666049.2">
    <property type="nucleotide sequence ID" value="NM_145937.4"/>
</dbReference>
<dbReference type="SMR" id="Q8R0F3"/>
<dbReference type="BioGRID" id="208463">
    <property type="interactions" value="19"/>
</dbReference>
<dbReference type="FunCoup" id="Q8R0F3">
    <property type="interactions" value="942"/>
</dbReference>
<dbReference type="STRING" id="10090.ENSMUSP00000032191"/>
<dbReference type="GlyConnect" id="2742">
    <property type="glycosylation" value="2 N-Linked glycans (1 site)"/>
</dbReference>
<dbReference type="GlyCosmos" id="Q8R0F3">
    <property type="glycosylation" value="1 site, 2 glycans"/>
</dbReference>
<dbReference type="GlyGen" id="Q8R0F3">
    <property type="glycosylation" value="2 sites, 3 N-linked glycans (1 site)"/>
</dbReference>
<dbReference type="iPTMnet" id="Q8R0F3"/>
<dbReference type="PhosphoSitePlus" id="Q8R0F3"/>
<dbReference type="SwissPalm" id="Q8R0F3"/>
<dbReference type="PaxDb" id="10090-ENSMUSP00000032191"/>
<dbReference type="PeptideAtlas" id="Q8R0F3"/>
<dbReference type="ProteomicsDB" id="257505"/>
<dbReference type="Pumba" id="Q8R0F3"/>
<dbReference type="Antibodypedia" id="44604">
    <property type="antibodies" value="196 antibodies from 29 providers"/>
</dbReference>
<dbReference type="DNASU" id="58911"/>
<dbReference type="Ensembl" id="ENSMUST00000032191.16">
    <property type="protein sequence ID" value="ENSMUSP00000032191.10"/>
    <property type="gene ID" value="ENSMUSG00000030101.16"/>
</dbReference>
<dbReference type="GeneID" id="58911"/>
<dbReference type="KEGG" id="mmu:58911"/>
<dbReference type="UCSC" id="uc009ddf.2">
    <property type="organism name" value="mouse"/>
</dbReference>
<dbReference type="AGR" id="MGI:1889844"/>
<dbReference type="CTD" id="285362"/>
<dbReference type="MGI" id="MGI:1889844">
    <property type="gene designation" value="Sumf1"/>
</dbReference>
<dbReference type="VEuPathDB" id="HostDB:ENSMUSG00000030101"/>
<dbReference type="eggNOG" id="ENOG502QVDG">
    <property type="taxonomic scope" value="Eukaryota"/>
</dbReference>
<dbReference type="GeneTree" id="ENSGT00390000008983"/>
<dbReference type="HOGENOM" id="CLU_012431_4_1_1"/>
<dbReference type="InParanoid" id="Q8R0F3"/>
<dbReference type="OMA" id="RQNVYDL"/>
<dbReference type="OrthoDB" id="659at2759"/>
<dbReference type="PhylomeDB" id="Q8R0F3"/>
<dbReference type="TreeFam" id="TF324027"/>
<dbReference type="Reactome" id="R-MMU-1663150">
    <property type="pathway name" value="The activation of arylsulfatases"/>
</dbReference>
<dbReference type="Reactome" id="R-MMU-9840310">
    <property type="pathway name" value="Glycosphingolipid catabolism"/>
</dbReference>
<dbReference type="UniPathway" id="UPA00910"/>
<dbReference type="BioGRID-ORCS" id="58911">
    <property type="hits" value="3 hits in 81 CRISPR screens"/>
</dbReference>
<dbReference type="ChiTaRS" id="Sumf1">
    <property type="organism name" value="mouse"/>
</dbReference>
<dbReference type="PRO" id="PR:Q8R0F3"/>
<dbReference type="Proteomes" id="UP000000589">
    <property type="component" value="Chromosome 6"/>
</dbReference>
<dbReference type="RNAct" id="Q8R0F3">
    <property type="molecule type" value="protein"/>
</dbReference>
<dbReference type="Bgee" id="ENSMUSG00000030101">
    <property type="expression patterns" value="Expressed in ascending aorta and 254 other cell types or tissues"/>
</dbReference>
<dbReference type="ExpressionAtlas" id="Q8R0F3">
    <property type="expression patterns" value="baseline and differential"/>
</dbReference>
<dbReference type="GO" id="GO:0005783">
    <property type="term" value="C:endoplasmic reticulum"/>
    <property type="evidence" value="ECO:0000314"/>
    <property type="project" value="MGI"/>
</dbReference>
<dbReference type="GO" id="GO:0005788">
    <property type="term" value="C:endoplasmic reticulum lumen"/>
    <property type="evidence" value="ECO:0000314"/>
    <property type="project" value="MGI"/>
</dbReference>
<dbReference type="GO" id="GO:1903135">
    <property type="term" value="F:cupric ion binding"/>
    <property type="evidence" value="ECO:0000250"/>
    <property type="project" value="UniProtKB"/>
</dbReference>
<dbReference type="GO" id="GO:0120147">
    <property type="term" value="F:formylglycine-generating oxidase activity"/>
    <property type="evidence" value="ECO:0000314"/>
    <property type="project" value="MGI"/>
</dbReference>
<dbReference type="GO" id="GO:0042802">
    <property type="term" value="F:identical protein binding"/>
    <property type="evidence" value="ECO:0000353"/>
    <property type="project" value="MGI"/>
</dbReference>
<dbReference type="GO" id="GO:0043687">
    <property type="term" value="P:post-translational protein modification"/>
    <property type="evidence" value="ECO:0000314"/>
    <property type="project" value="MGI"/>
</dbReference>
<dbReference type="GO" id="GO:0018158">
    <property type="term" value="P:protein oxidation"/>
    <property type="evidence" value="ECO:0000250"/>
    <property type="project" value="UniProtKB"/>
</dbReference>
<dbReference type="FunFam" id="3.90.1580.10:FF:000001">
    <property type="entry name" value="Sulfatase modifying factor 1"/>
    <property type="match status" value="1"/>
</dbReference>
<dbReference type="Gene3D" id="3.90.1580.10">
    <property type="entry name" value="paralog of FGE (formylglycine-generating enzyme)"/>
    <property type="match status" value="1"/>
</dbReference>
<dbReference type="InterPro" id="IPR016187">
    <property type="entry name" value="CTDL_fold"/>
</dbReference>
<dbReference type="InterPro" id="IPR051043">
    <property type="entry name" value="Sulfatase_Mod_Factor_Kinase"/>
</dbReference>
<dbReference type="InterPro" id="IPR005532">
    <property type="entry name" value="SUMF_dom"/>
</dbReference>
<dbReference type="InterPro" id="IPR042095">
    <property type="entry name" value="SUMF_sf"/>
</dbReference>
<dbReference type="PANTHER" id="PTHR23150:SF19">
    <property type="entry name" value="FORMYLGLYCINE-GENERATING ENZYME"/>
    <property type="match status" value="1"/>
</dbReference>
<dbReference type="PANTHER" id="PTHR23150">
    <property type="entry name" value="SULFATASE MODIFYING FACTOR 1, 2"/>
    <property type="match status" value="1"/>
</dbReference>
<dbReference type="Pfam" id="PF03781">
    <property type="entry name" value="FGE-sulfatase"/>
    <property type="match status" value="1"/>
</dbReference>
<dbReference type="SUPFAM" id="SSF56436">
    <property type="entry name" value="C-type lectin-like"/>
    <property type="match status" value="1"/>
</dbReference>
<organism>
    <name type="scientific">Mus musculus</name>
    <name type="common">Mouse</name>
    <dbReference type="NCBI Taxonomy" id="10090"/>
    <lineage>
        <taxon>Eukaryota</taxon>
        <taxon>Metazoa</taxon>
        <taxon>Chordata</taxon>
        <taxon>Craniata</taxon>
        <taxon>Vertebrata</taxon>
        <taxon>Euteleostomi</taxon>
        <taxon>Mammalia</taxon>
        <taxon>Eutheria</taxon>
        <taxon>Euarchontoglires</taxon>
        <taxon>Glires</taxon>
        <taxon>Rodentia</taxon>
        <taxon>Myomorpha</taxon>
        <taxon>Muroidea</taxon>
        <taxon>Muridae</taxon>
        <taxon>Murinae</taxon>
        <taxon>Mus</taxon>
        <taxon>Mus</taxon>
    </lineage>
</organism>
<sequence>MAAPAREPALRCCIRLARVFLLLVLACEVAGSDEAEAREGAASLAGSCGCGTPQRAGAHGSSAAAQRYSREANAPGLTSGPRPLALTKMVPIPAGVFTMGTDDPQIRQDGEAPARRVTVDGFYMDAYEVSNADFEKFVNSTGYLTEAEKFGDSFVFEGMLSEQVKTHIHQAVAAAPWWLPVKGANWRHPEGPDSSILHRSNHPVLHVSWNDAVAYCTWAGKRLPTEAEWEYSCRGGLQNRLFPWGNKLQPKGQHYANIWQGKFPVSNTGEDGFQGTAPVDAFPPNGYGLYNIVGNVWEWTSDWWTVHHSVEETFNPKGPTSGKDRVKKGGSYMCHKSYCYRYRCAARSQNTPDSSASNLGFRCAADHLPTAD</sequence>
<keyword id="KW-0106">Calcium</keyword>
<keyword id="KW-0186">Copper</keyword>
<keyword id="KW-1015">Disulfide bond</keyword>
<keyword id="KW-0256">Endoplasmic reticulum</keyword>
<keyword id="KW-0325">Glycoprotein</keyword>
<keyword id="KW-0479">Metal-binding</keyword>
<keyword id="KW-0560">Oxidoreductase</keyword>
<keyword id="KW-1185">Reference proteome</keyword>
<keyword id="KW-0732">Signal</keyword>
<proteinExistence type="evidence at protein level"/>
<protein>
    <recommendedName>
        <fullName evidence="1">Formylglycine-generating enzyme</fullName>
        <shortName evidence="1">FGE</shortName>
        <ecNumber evidence="1">1.8.3.7</ecNumber>
    </recommendedName>
    <alternativeName>
        <fullName evidence="1">C-alpha-formylglycine-generating enzyme 1</fullName>
    </alternativeName>
    <alternativeName>
        <fullName evidence="1">Sulfatase-modifying factor 1</fullName>
    </alternativeName>
</protein>
<gene>
    <name evidence="6" type="primary">Sumf1</name>
    <name evidence="1" type="synonym">Fge</name>
</gene>
<feature type="signal peptide" evidence="1">
    <location>
        <begin position="1"/>
        <end position="31"/>
    </location>
</feature>
<feature type="chain" id="PRO_0000033457" description="Formylglycine-generating enzyme">
    <location>
        <begin position="32"/>
        <end position="372"/>
    </location>
</feature>
<feature type="region of interest" description="Disordered" evidence="3">
    <location>
        <begin position="61"/>
        <end position="80"/>
    </location>
</feature>
<feature type="region of interest" description="Interaction with sulfatases" evidence="1">
    <location>
        <begin position="339"/>
        <end position="358"/>
    </location>
</feature>
<feature type="binding site" evidence="1">
    <location>
        <position position="128"/>
    </location>
    <ligand>
        <name>Ca(2+)</name>
        <dbReference type="ChEBI" id="CHEBI:29108"/>
        <label>2</label>
    </ligand>
</feature>
<feature type="binding site" evidence="1">
    <location>
        <position position="257"/>
    </location>
    <ligand>
        <name>Ca(2+)</name>
        <dbReference type="ChEBI" id="CHEBI:29108"/>
        <label>1</label>
    </ligand>
</feature>
<feature type="binding site" evidence="1">
    <location>
        <position position="258"/>
    </location>
    <ligand>
        <name>Ca(2+)</name>
        <dbReference type="ChEBI" id="CHEBI:29108"/>
        <label>1</label>
    </ligand>
</feature>
<feature type="binding site" evidence="1">
    <location>
        <position position="271"/>
    </location>
    <ligand>
        <name>Ca(2+)</name>
        <dbReference type="ChEBI" id="CHEBI:29108"/>
        <label>1</label>
    </ligand>
</feature>
<feature type="binding site" evidence="1">
    <location>
        <position position="273"/>
    </location>
    <ligand>
        <name>Ca(2+)</name>
        <dbReference type="ChEBI" id="CHEBI:29108"/>
        <label>1</label>
    </ligand>
</feature>
<feature type="binding site" evidence="1">
    <location>
        <position position="291"/>
    </location>
    <ligand>
        <name>Ca(2+)</name>
        <dbReference type="ChEBI" id="CHEBI:29108"/>
        <label>2</label>
    </ligand>
</feature>
<feature type="binding site" evidence="1">
    <location>
        <position position="294"/>
    </location>
    <ligand>
        <name>Ca(2+)</name>
        <dbReference type="ChEBI" id="CHEBI:29108"/>
        <label>2</label>
    </ligand>
</feature>
<feature type="binding site" evidence="1">
    <location>
        <position position="298"/>
    </location>
    <ligand>
        <name>Ca(2+)</name>
        <dbReference type="ChEBI" id="CHEBI:29108"/>
        <label>2</label>
    </ligand>
</feature>
<feature type="binding site" evidence="1">
    <location>
        <position position="334"/>
    </location>
    <ligand>
        <name>Cu(2+)</name>
        <dbReference type="ChEBI" id="CHEBI:29036"/>
        <note>catalytic</note>
    </ligand>
</feature>
<feature type="binding site" evidence="1">
    <location>
        <position position="339"/>
    </location>
    <ligand>
        <name>Cu(2+)</name>
        <dbReference type="ChEBI" id="CHEBI:29036"/>
        <note>catalytic</note>
    </ligand>
</feature>
<feature type="glycosylation site" description="N-linked (GlcNAc...) asparagine" evidence="2">
    <location>
        <position position="139"/>
    </location>
</feature>
<feature type="disulfide bond" evidence="1">
    <location>
        <begin position="48"/>
        <end position="50"/>
    </location>
</feature>
<feature type="disulfide bond" evidence="1">
    <location>
        <begin position="216"/>
        <end position="363"/>
    </location>
</feature>
<feature type="disulfide bond" evidence="1">
    <location>
        <begin position="233"/>
        <end position="344"/>
    </location>
</feature>
<feature type="sequence conflict" description="In Ref. 1; BAE34887." evidence="5" ref="1">
    <original>E</original>
    <variation>V</variation>
    <location>
        <position position="39"/>
    </location>
</feature>
<evidence type="ECO:0000250" key="1">
    <source>
        <dbReference type="UniProtKB" id="Q8NBK3"/>
    </source>
</evidence>
<evidence type="ECO:0000255" key="2">
    <source>
        <dbReference type="PROSITE-ProRule" id="PRU00498"/>
    </source>
</evidence>
<evidence type="ECO:0000256" key="3">
    <source>
        <dbReference type="SAM" id="MobiDB-lite"/>
    </source>
</evidence>
<evidence type="ECO:0000269" key="4">
    <source>
    </source>
</evidence>
<evidence type="ECO:0000305" key="5"/>
<evidence type="ECO:0000312" key="6">
    <source>
        <dbReference type="MGI" id="MGI:1889844"/>
    </source>
</evidence>